<comment type="function">
    <text evidence="1">With S4 and S5 plays an important role in translational accuracy.</text>
</comment>
<comment type="function">
    <text evidence="1">Interacts with and stabilizes bases of the 16S rRNA that are involved in tRNA selection in the A site and with the mRNA backbone. Located at the interface of the 30S and 50S subunits, it traverses the body of the 30S subunit contacting proteins on the other side and probably holding the rRNA structure together. The combined cluster of proteins S8, S12 and S17 appears to hold together the shoulder and platform of the 30S subunit.</text>
</comment>
<comment type="subunit">
    <text evidence="1">Part of the 30S ribosomal subunit. Contacts proteins S8 and S17. May interact with IF1 in the 30S initiation complex.</text>
</comment>
<comment type="similarity">
    <text evidence="1">Belongs to the universal ribosomal protein uS12 family.</text>
</comment>
<comment type="caution">
    <text evidence="3">Because the enzyme that would modify Asp-89 to 3-methylthioaspartic acid has not been found in the proteome of this organism, that modification is not predicted.</text>
</comment>
<keyword id="KW-0687">Ribonucleoprotein</keyword>
<keyword id="KW-0689">Ribosomal protein</keyword>
<keyword id="KW-0694">RNA-binding</keyword>
<keyword id="KW-0699">rRNA-binding</keyword>
<keyword id="KW-0820">tRNA-binding</keyword>
<protein>
    <recommendedName>
        <fullName evidence="1">Small ribosomal subunit protein uS12</fullName>
    </recommendedName>
    <alternativeName>
        <fullName evidence="3">30S ribosomal protein S12</fullName>
    </alternativeName>
</protein>
<reference key="1">
    <citation type="journal article" date="2004" name="Nucleic Acids Res.">
        <title>Comparative analysis of the Borrelia garinii genome.</title>
        <authorList>
            <person name="Gloeckner G."/>
            <person name="Lehmann R."/>
            <person name="Romualdi A."/>
            <person name="Pradella S."/>
            <person name="Schulte-Spechtel U."/>
            <person name="Schilhabel M."/>
            <person name="Wilske B."/>
            <person name="Suehnel J."/>
            <person name="Platzer M."/>
        </authorList>
    </citation>
    <scope>NUCLEOTIDE SEQUENCE [LARGE SCALE GENOMIC DNA]</scope>
    <source>
        <strain>ATCC BAA-2496 / DSM 23469 / PBi</strain>
    </source>
</reference>
<dbReference type="EMBL" id="CP000013">
    <property type="protein sequence ID" value="AAU07240.1"/>
    <property type="molecule type" value="Genomic_DNA"/>
</dbReference>
<dbReference type="RefSeq" id="WP_002656492.1">
    <property type="nucleotide sequence ID" value="NZ_CP028872.1"/>
</dbReference>
<dbReference type="SMR" id="Q661N1"/>
<dbReference type="GeneID" id="83865854"/>
<dbReference type="KEGG" id="bga:BG0388"/>
<dbReference type="eggNOG" id="COG0048">
    <property type="taxonomic scope" value="Bacteria"/>
</dbReference>
<dbReference type="HOGENOM" id="CLU_104295_1_2_12"/>
<dbReference type="OrthoDB" id="9802366at2"/>
<dbReference type="Proteomes" id="UP000002276">
    <property type="component" value="Chromosome"/>
</dbReference>
<dbReference type="GO" id="GO:0015935">
    <property type="term" value="C:small ribosomal subunit"/>
    <property type="evidence" value="ECO:0007669"/>
    <property type="project" value="InterPro"/>
</dbReference>
<dbReference type="GO" id="GO:0019843">
    <property type="term" value="F:rRNA binding"/>
    <property type="evidence" value="ECO:0007669"/>
    <property type="project" value="UniProtKB-UniRule"/>
</dbReference>
<dbReference type="GO" id="GO:0003735">
    <property type="term" value="F:structural constituent of ribosome"/>
    <property type="evidence" value="ECO:0007669"/>
    <property type="project" value="InterPro"/>
</dbReference>
<dbReference type="GO" id="GO:0000049">
    <property type="term" value="F:tRNA binding"/>
    <property type="evidence" value="ECO:0007669"/>
    <property type="project" value="UniProtKB-UniRule"/>
</dbReference>
<dbReference type="GO" id="GO:0006412">
    <property type="term" value="P:translation"/>
    <property type="evidence" value="ECO:0007669"/>
    <property type="project" value="UniProtKB-UniRule"/>
</dbReference>
<dbReference type="CDD" id="cd03368">
    <property type="entry name" value="Ribosomal_S12"/>
    <property type="match status" value="1"/>
</dbReference>
<dbReference type="FunFam" id="2.40.50.140:FF:000001">
    <property type="entry name" value="30S ribosomal protein S12"/>
    <property type="match status" value="1"/>
</dbReference>
<dbReference type="Gene3D" id="2.40.50.140">
    <property type="entry name" value="Nucleic acid-binding proteins"/>
    <property type="match status" value="1"/>
</dbReference>
<dbReference type="HAMAP" id="MF_00403_B">
    <property type="entry name" value="Ribosomal_uS12_B"/>
    <property type="match status" value="1"/>
</dbReference>
<dbReference type="InterPro" id="IPR012340">
    <property type="entry name" value="NA-bd_OB-fold"/>
</dbReference>
<dbReference type="InterPro" id="IPR006032">
    <property type="entry name" value="Ribosomal_uS12"/>
</dbReference>
<dbReference type="InterPro" id="IPR005679">
    <property type="entry name" value="Ribosomal_uS12_bac"/>
</dbReference>
<dbReference type="NCBIfam" id="TIGR00981">
    <property type="entry name" value="rpsL_bact"/>
    <property type="match status" value="1"/>
</dbReference>
<dbReference type="PANTHER" id="PTHR11652">
    <property type="entry name" value="30S RIBOSOMAL PROTEIN S12 FAMILY MEMBER"/>
    <property type="match status" value="1"/>
</dbReference>
<dbReference type="Pfam" id="PF00164">
    <property type="entry name" value="Ribosom_S12_S23"/>
    <property type="match status" value="1"/>
</dbReference>
<dbReference type="PIRSF" id="PIRSF002133">
    <property type="entry name" value="Ribosomal_S12/S23"/>
    <property type="match status" value="1"/>
</dbReference>
<dbReference type="PRINTS" id="PR01034">
    <property type="entry name" value="RIBOSOMALS12"/>
</dbReference>
<dbReference type="SUPFAM" id="SSF50249">
    <property type="entry name" value="Nucleic acid-binding proteins"/>
    <property type="match status" value="1"/>
</dbReference>
<dbReference type="PROSITE" id="PS00055">
    <property type="entry name" value="RIBOSOMAL_S12"/>
    <property type="match status" value="1"/>
</dbReference>
<organism>
    <name type="scientific">Borrelia garinii subsp. bavariensis (strain ATCC BAA-2496 / DSM 23469 / PBi)</name>
    <name type="common">Borreliella bavariensis</name>
    <dbReference type="NCBI Taxonomy" id="290434"/>
    <lineage>
        <taxon>Bacteria</taxon>
        <taxon>Pseudomonadati</taxon>
        <taxon>Spirochaetota</taxon>
        <taxon>Spirochaetia</taxon>
        <taxon>Spirochaetales</taxon>
        <taxon>Borreliaceae</taxon>
        <taxon>Borreliella</taxon>
    </lineage>
</organism>
<sequence length="124" mass="13792">MPTINQLIRKPRKSQTEKTASPALQNCPQRRGICTRVMTVTPKKPNSALRKVARVRLSNGFEVTAYIPGIGHNLQEHSVVLIRGGRVKDLPGVRYHIVRGAKDTLGVNNRKKGRSKYGTKKPKA</sequence>
<name>RS12_BORGP</name>
<evidence type="ECO:0000255" key="1">
    <source>
        <dbReference type="HAMAP-Rule" id="MF_00403"/>
    </source>
</evidence>
<evidence type="ECO:0000256" key="2">
    <source>
        <dbReference type="SAM" id="MobiDB-lite"/>
    </source>
</evidence>
<evidence type="ECO:0000305" key="3"/>
<gene>
    <name evidence="1" type="primary">rpsL</name>
    <name type="ordered locus">BG0388</name>
</gene>
<proteinExistence type="inferred from homology"/>
<feature type="chain" id="PRO_0000146186" description="Small ribosomal subunit protein uS12">
    <location>
        <begin position="1"/>
        <end position="124"/>
    </location>
</feature>
<feature type="region of interest" description="Disordered" evidence="2">
    <location>
        <begin position="1"/>
        <end position="27"/>
    </location>
</feature>
<feature type="compositionally biased region" description="Polar residues" evidence="2">
    <location>
        <begin position="17"/>
        <end position="27"/>
    </location>
</feature>
<accession>Q661N1</accession>